<organism>
    <name type="scientific">Chlamydia abortus (strain DSM 27085 / S26/3)</name>
    <name type="common">Chlamydophila abortus</name>
    <dbReference type="NCBI Taxonomy" id="218497"/>
    <lineage>
        <taxon>Bacteria</taxon>
        <taxon>Pseudomonadati</taxon>
        <taxon>Chlamydiota</taxon>
        <taxon>Chlamydiia</taxon>
        <taxon>Chlamydiales</taxon>
        <taxon>Chlamydiaceae</taxon>
        <taxon>Chlamydia/Chlamydophila group</taxon>
        <taxon>Chlamydia</taxon>
    </lineage>
</organism>
<feature type="chain" id="PRO_0000268309" description="Bifunctional protein FolD">
    <location>
        <begin position="1"/>
        <end position="287"/>
    </location>
</feature>
<feature type="binding site" evidence="1">
    <location>
        <begin position="160"/>
        <end position="162"/>
    </location>
    <ligand>
        <name>NADP(+)</name>
        <dbReference type="ChEBI" id="CHEBI:58349"/>
    </ligand>
</feature>
<feature type="binding site" evidence="1">
    <location>
        <position position="189"/>
    </location>
    <ligand>
        <name>NADP(+)</name>
        <dbReference type="ChEBI" id="CHEBI:58349"/>
    </ligand>
</feature>
<feature type="binding site" evidence="1">
    <location>
        <position position="230"/>
    </location>
    <ligand>
        <name>NADP(+)</name>
        <dbReference type="ChEBI" id="CHEBI:58349"/>
    </ligand>
</feature>
<sequence length="287" mass="30695">MLLKGTPVAERVLEKIKQEISHSSTPPGLAVVLIGNDPASEVYVGMKVKKATDLGMVSKAHRLPSDATLTDILKLIERLNNDPTIHGILVQIPLPKHLDSHAIIQAISPEKDVDGLHPVNMGKLLLGQLGGFAPCTPAGIIELLHYYEIPLLGRHVAVVGRSNIVGKPLAAMLMQKHPSTNATVTLLHSQSQNLKEILKTADIIIAAVGVPLFIKESMVSSHAVIIDVGTSRVATNNAKGYILVGDVDFNNVVTKCKAISPVPGGVGPMTVAMLMKNTWESYQKFSS</sequence>
<accession>Q5L644</accession>
<name>FOLD_CHLAB</name>
<dbReference type="EC" id="1.5.1.5" evidence="1"/>
<dbReference type="EC" id="3.5.4.9" evidence="1"/>
<dbReference type="EMBL" id="CR848038">
    <property type="protein sequence ID" value="CAH63887.1"/>
    <property type="molecule type" value="Genomic_DNA"/>
</dbReference>
<dbReference type="RefSeq" id="WP_011097068.1">
    <property type="nucleotide sequence ID" value="NC_004552.2"/>
</dbReference>
<dbReference type="SMR" id="Q5L644"/>
<dbReference type="KEGG" id="cab:CAB434"/>
<dbReference type="eggNOG" id="COG0190">
    <property type="taxonomic scope" value="Bacteria"/>
</dbReference>
<dbReference type="HOGENOM" id="CLU_034045_2_0_0"/>
<dbReference type="OrthoDB" id="9803580at2"/>
<dbReference type="UniPathway" id="UPA00193"/>
<dbReference type="Proteomes" id="UP000001012">
    <property type="component" value="Chromosome"/>
</dbReference>
<dbReference type="GO" id="GO:0005829">
    <property type="term" value="C:cytosol"/>
    <property type="evidence" value="ECO:0007669"/>
    <property type="project" value="TreeGrafter"/>
</dbReference>
<dbReference type="GO" id="GO:0004477">
    <property type="term" value="F:methenyltetrahydrofolate cyclohydrolase activity"/>
    <property type="evidence" value="ECO:0007669"/>
    <property type="project" value="UniProtKB-UniRule"/>
</dbReference>
<dbReference type="GO" id="GO:0004488">
    <property type="term" value="F:methylenetetrahydrofolate dehydrogenase (NADP+) activity"/>
    <property type="evidence" value="ECO:0007669"/>
    <property type="project" value="UniProtKB-UniRule"/>
</dbReference>
<dbReference type="GO" id="GO:0000105">
    <property type="term" value="P:L-histidine biosynthetic process"/>
    <property type="evidence" value="ECO:0007669"/>
    <property type="project" value="UniProtKB-KW"/>
</dbReference>
<dbReference type="GO" id="GO:0009086">
    <property type="term" value="P:methionine biosynthetic process"/>
    <property type="evidence" value="ECO:0007669"/>
    <property type="project" value="UniProtKB-KW"/>
</dbReference>
<dbReference type="GO" id="GO:0006164">
    <property type="term" value="P:purine nucleotide biosynthetic process"/>
    <property type="evidence" value="ECO:0007669"/>
    <property type="project" value="UniProtKB-KW"/>
</dbReference>
<dbReference type="GO" id="GO:0035999">
    <property type="term" value="P:tetrahydrofolate interconversion"/>
    <property type="evidence" value="ECO:0007669"/>
    <property type="project" value="UniProtKB-UniRule"/>
</dbReference>
<dbReference type="CDD" id="cd01080">
    <property type="entry name" value="NAD_bind_m-THF_DH_Cyclohyd"/>
    <property type="match status" value="1"/>
</dbReference>
<dbReference type="FunFam" id="3.40.50.720:FF:000189">
    <property type="entry name" value="Bifunctional protein FolD"/>
    <property type="match status" value="1"/>
</dbReference>
<dbReference type="FunFam" id="3.40.50.10860:FF:000005">
    <property type="entry name" value="C-1-tetrahydrofolate synthase, cytoplasmic, putative"/>
    <property type="match status" value="1"/>
</dbReference>
<dbReference type="Gene3D" id="3.40.50.10860">
    <property type="entry name" value="Leucine Dehydrogenase, chain A, domain 1"/>
    <property type="match status" value="1"/>
</dbReference>
<dbReference type="Gene3D" id="3.40.50.720">
    <property type="entry name" value="NAD(P)-binding Rossmann-like Domain"/>
    <property type="match status" value="1"/>
</dbReference>
<dbReference type="HAMAP" id="MF_01576">
    <property type="entry name" value="THF_DHG_CYH"/>
    <property type="match status" value="1"/>
</dbReference>
<dbReference type="InterPro" id="IPR046346">
    <property type="entry name" value="Aminoacid_DH-like_N_sf"/>
</dbReference>
<dbReference type="InterPro" id="IPR036291">
    <property type="entry name" value="NAD(P)-bd_dom_sf"/>
</dbReference>
<dbReference type="InterPro" id="IPR000672">
    <property type="entry name" value="THF_DH/CycHdrlase"/>
</dbReference>
<dbReference type="InterPro" id="IPR020630">
    <property type="entry name" value="THF_DH/CycHdrlase_cat_dom"/>
</dbReference>
<dbReference type="InterPro" id="IPR020867">
    <property type="entry name" value="THF_DH/CycHdrlase_CS"/>
</dbReference>
<dbReference type="InterPro" id="IPR020631">
    <property type="entry name" value="THF_DH/CycHdrlase_NAD-bd_dom"/>
</dbReference>
<dbReference type="NCBIfam" id="NF010778">
    <property type="entry name" value="PRK14181.1"/>
    <property type="match status" value="1"/>
</dbReference>
<dbReference type="PANTHER" id="PTHR48099:SF5">
    <property type="entry name" value="C-1-TETRAHYDROFOLATE SYNTHASE, CYTOPLASMIC"/>
    <property type="match status" value="1"/>
</dbReference>
<dbReference type="PANTHER" id="PTHR48099">
    <property type="entry name" value="C-1-TETRAHYDROFOLATE SYNTHASE, CYTOPLASMIC-RELATED"/>
    <property type="match status" value="1"/>
</dbReference>
<dbReference type="Pfam" id="PF00763">
    <property type="entry name" value="THF_DHG_CYH"/>
    <property type="match status" value="1"/>
</dbReference>
<dbReference type="Pfam" id="PF02882">
    <property type="entry name" value="THF_DHG_CYH_C"/>
    <property type="match status" value="1"/>
</dbReference>
<dbReference type="PRINTS" id="PR00085">
    <property type="entry name" value="THFDHDRGNASE"/>
</dbReference>
<dbReference type="SUPFAM" id="SSF53223">
    <property type="entry name" value="Aminoacid dehydrogenase-like, N-terminal domain"/>
    <property type="match status" value="1"/>
</dbReference>
<dbReference type="SUPFAM" id="SSF51735">
    <property type="entry name" value="NAD(P)-binding Rossmann-fold domains"/>
    <property type="match status" value="1"/>
</dbReference>
<dbReference type="PROSITE" id="PS00767">
    <property type="entry name" value="THF_DHG_CYH_2"/>
    <property type="match status" value="1"/>
</dbReference>
<protein>
    <recommendedName>
        <fullName evidence="1">Bifunctional protein FolD</fullName>
    </recommendedName>
    <domain>
        <recommendedName>
            <fullName evidence="1">Methylenetetrahydrofolate dehydrogenase</fullName>
            <ecNumber evidence="1">1.5.1.5</ecNumber>
        </recommendedName>
    </domain>
    <domain>
        <recommendedName>
            <fullName evidence="1">Methenyltetrahydrofolate cyclohydrolase</fullName>
            <ecNumber evidence="1">3.5.4.9</ecNumber>
        </recommendedName>
    </domain>
</protein>
<proteinExistence type="inferred from homology"/>
<reference key="1">
    <citation type="journal article" date="2005" name="Genome Res.">
        <title>The Chlamydophila abortus genome sequence reveals an array of variable proteins that contribute to interspecies variation.</title>
        <authorList>
            <person name="Thomson N.R."/>
            <person name="Yeats C."/>
            <person name="Bell K."/>
            <person name="Holden M.T.G."/>
            <person name="Bentley S.D."/>
            <person name="Livingstone M."/>
            <person name="Cerdeno-Tarraga A.-M."/>
            <person name="Harris B."/>
            <person name="Doggett J."/>
            <person name="Ormond D."/>
            <person name="Mungall K."/>
            <person name="Clarke K."/>
            <person name="Feltwell T."/>
            <person name="Hance Z."/>
            <person name="Sanders M."/>
            <person name="Quail M.A."/>
            <person name="Price C."/>
            <person name="Barrell B.G."/>
            <person name="Parkhill J."/>
            <person name="Longbottom D."/>
        </authorList>
    </citation>
    <scope>NUCLEOTIDE SEQUENCE [LARGE SCALE GENOMIC DNA]</scope>
    <source>
        <strain>DSM 27085 / S26/3</strain>
    </source>
</reference>
<evidence type="ECO:0000255" key="1">
    <source>
        <dbReference type="HAMAP-Rule" id="MF_01576"/>
    </source>
</evidence>
<comment type="function">
    <text evidence="1">Catalyzes the oxidation of 5,10-methylenetetrahydrofolate to 5,10-methenyltetrahydrofolate and then the hydrolysis of 5,10-methenyltetrahydrofolate to 10-formyltetrahydrofolate.</text>
</comment>
<comment type="catalytic activity">
    <reaction evidence="1">
        <text>(6R)-5,10-methylene-5,6,7,8-tetrahydrofolate + NADP(+) = (6R)-5,10-methenyltetrahydrofolate + NADPH</text>
        <dbReference type="Rhea" id="RHEA:22812"/>
        <dbReference type="ChEBI" id="CHEBI:15636"/>
        <dbReference type="ChEBI" id="CHEBI:57455"/>
        <dbReference type="ChEBI" id="CHEBI:57783"/>
        <dbReference type="ChEBI" id="CHEBI:58349"/>
        <dbReference type="EC" id="1.5.1.5"/>
    </reaction>
</comment>
<comment type="catalytic activity">
    <reaction evidence="1">
        <text>(6R)-5,10-methenyltetrahydrofolate + H2O = (6R)-10-formyltetrahydrofolate + H(+)</text>
        <dbReference type="Rhea" id="RHEA:23700"/>
        <dbReference type="ChEBI" id="CHEBI:15377"/>
        <dbReference type="ChEBI" id="CHEBI:15378"/>
        <dbReference type="ChEBI" id="CHEBI:57455"/>
        <dbReference type="ChEBI" id="CHEBI:195366"/>
        <dbReference type="EC" id="3.5.4.9"/>
    </reaction>
</comment>
<comment type="pathway">
    <text evidence="1">One-carbon metabolism; tetrahydrofolate interconversion.</text>
</comment>
<comment type="subunit">
    <text evidence="1">Homodimer.</text>
</comment>
<comment type="similarity">
    <text evidence="1">Belongs to the tetrahydrofolate dehydrogenase/cyclohydrolase family.</text>
</comment>
<gene>
    <name evidence="1" type="primary">folD</name>
    <name type="ordered locus">CAB434</name>
</gene>
<keyword id="KW-0028">Amino-acid biosynthesis</keyword>
<keyword id="KW-0368">Histidine biosynthesis</keyword>
<keyword id="KW-0378">Hydrolase</keyword>
<keyword id="KW-0486">Methionine biosynthesis</keyword>
<keyword id="KW-0511">Multifunctional enzyme</keyword>
<keyword id="KW-0521">NADP</keyword>
<keyword id="KW-0554">One-carbon metabolism</keyword>
<keyword id="KW-0560">Oxidoreductase</keyword>
<keyword id="KW-0658">Purine biosynthesis</keyword>